<accession>B3DTT9</accession>
<gene>
    <name evidence="2" type="primary">ddl</name>
    <name type="ordered locus">BLD_1112</name>
</gene>
<evidence type="ECO:0000250" key="1"/>
<evidence type="ECO:0000255" key="2">
    <source>
        <dbReference type="HAMAP-Rule" id="MF_00047"/>
    </source>
</evidence>
<reference key="1">
    <citation type="journal article" date="2008" name="BMC Genomics">
        <title>Comparative genomic analysis of the gut bacterium Bifidobacterium longum reveals loci susceptible to deletion during pure culture growth.</title>
        <authorList>
            <person name="Lee J.H."/>
            <person name="Karamychev V.N."/>
            <person name="Kozyavkin S.A."/>
            <person name="Mills D."/>
            <person name="Pavlov A.R."/>
            <person name="Pavlova N.V."/>
            <person name="Polouchine N.N."/>
            <person name="Richardson P.M."/>
            <person name="Shakhova V.V."/>
            <person name="Slesarev A.I."/>
            <person name="Weimer B."/>
            <person name="O'Sullivan D.J."/>
        </authorList>
    </citation>
    <scope>NUCLEOTIDE SEQUENCE [LARGE SCALE GENOMIC DNA]</scope>
    <source>
        <strain>DJO10A</strain>
    </source>
</reference>
<sequence length="395" mass="42397">MAKKRVVVLYGGRADEHSISCISTAGVLGAMDTERFEPIPVGITKDGKWIINGEDPRGWNLDGGELPTVKITPESRPVMLDPSRGQDGFFIGEPSHINSADSGFGTSFVSMSDPEMHHVLTSLGHVDAVLPVLHGPYGEDGTVQGLLEMMGVPYVGCGVFASAACMDKHYTKVVLDAAGIPTAPGVTVDARNFTAADVLAEIEDAGLTYPLFVKPSRAGSSFGVTKVEKADDRETQQDRLAAAIATAGEHDWKVLVEQGIDGREIECAVLCPKAGDEPEASWPGEIVLDHQNDDQFYDFDSKYMDASASHVEVPANLPVSVLEDVRDVARRAFKAVDGVGLSRVDTFVTPDGTVMVNEINTMPGFTPISMYPKAWDATGVSYTELITRLIEGVLR</sequence>
<dbReference type="EC" id="6.3.2.4" evidence="2"/>
<dbReference type="EMBL" id="CP000605">
    <property type="protein sequence ID" value="ACD98558.1"/>
    <property type="molecule type" value="Genomic_DNA"/>
</dbReference>
<dbReference type="RefSeq" id="WP_010081636.1">
    <property type="nucleotide sequence ID" value="NZ_AABM02000027.1"/>
</dbReference>
<dbReference type="SMR" id="B3DTT9"/>
<dbReference type="KEGG" id="blj:BLD_1112"/>
<dbReference type="HOGENOM" id="CLU_039268_0_1_11"/>
<dbReference type="UniPathway" id="UPA00219"/>
<dbReference type="Proteomes" id="UP000002419">
    <property type="component" value="Chromosome"/>
</dbReference>
<dbReference type="GO" id="GO:0005829">
    <property type="term" value="C:cytosol"/>
    <property type="evidence" value="ECO:0007669"/>
    <property type="project" value="TreeGrafter"/>
</dbReference>
<dbReference type="GO" id="GO:0005524">
    <property type="term" value="F:ATP binding"/>
    <property type="evidence" value="ECO:0007669"/>
    <property type="project" value="UniProtKB-KW"/>
</dbReference>
<dbReference type="GO" id="GO:0008716">
    <property type="term" value="F:D-alanine-D-alanine ligase activity"/>
    <property type="evidence" value="ECO:0007669"/>
    <property type="project" value="UniProtKB-UniRule"/>
</dbReference>
<dbReference type="GO" id="GO:0046872">
    <property type="term" value="F:metal ion binding"/>
    <property type="evidence" value="ECO:0007669"/>
    <property type="project" value="UniProtKB-KW"/>
</dbReference>
<dbReference type="GO" id="GO:0071555">
    <property type="term" value="P:cell wall organization"/>
    <property type="evidence" value="ECO:0007669"/>
    <property type="project" value="UniProtKB-KW"/>
</dbReference>
<dbReference type="GO" id="GO:0009252">
    <property type="term" value="P:peptidoglycan biosynthetic process"/>
    <property type="evidence" value="ECO:0007669"/>
    <property type="project" value="UniProtKB-UniRule"/>
</dbReference>
<dbReference type="GO" id="GO:0008360">
    <property type="term" value="P:regulation of cell shape"/>
    <property type="evidence" value="ECO:0007669"/>
    <property type="project" value="UniProtKB-KW"/>
</dbReference>
<dbReference type="FunFam" id="3.30.470.20:FF:000008">
    <property type="entry name" value="D-alanine--D-alanine ligase"/>
    <property type="match status" value="1"/>
</dbReference>
<dbReference type="Gene3D" id="3.40.50.20">
    <property type="match status" value="1"/>
</dbReference>
<dbReference type="Gene3D" id="3.30.1490.20">
    <property type="entry name" value="ATP-grasp fold, A domain"/>
    <property type="match status" value="1"/>
</dbReference>
<dbReference type="Gene3D" id="3.30.470.20">
    <property type="entry name" value="ATP-grasp fold, B domain"/>
    <property type="match status" value="1"/>
</dbReference>
<dbReference type="HAMAP" id="MF_00047">
    <property type="entry name" value="Dala_Dala_lig"/>
    <property type="match status" value="1"/>
</dbReference>
<dbReference type="InterPro" id="IPR011761">
    <property type="entry name" value="ATP-grasp"/>
</dbReference>
<dbReference type="InterPro" id="IPR013815">
    <property type="entry name" value="ATP_grasp_subdomain_1"/>
</dbReference>
<dbReference type="InterPro" id="IPR000291">
    <property type="entry name" value="D-Ala_lig_Van_CS"/>
</dbReference>
<dbReference type="InterPro" id="IPR005905">
    <property type="entry name" value="D_ala_D_ala"/>
</dbReference>
<dbReference type="InterPro" id="IPR011095">
    <property type="entry name" value="Dala_Dala_lig_C"/>
</dbReference>
<dbReference type="InterPro" id="IPR011127">
    <property type="entry name" value="Dala_Dala_lig_N"/>
</dbReference>
<dbReference type="InterPro" id="IPR016185">
    <property type="entry name" value="PreATP-grasp_dom_sf"/>
</dbReference>
<dbReference type="NCBIfam" id="TIGR01205">
    <property type="entry name" value="D_ala_D_alaTIGR"/>
    <property type="match status" value="1"/>
</dbReference>
<dbReference type="NCBIfam" id="NF002528">
    <property type="entry name" value="PRK01966.1-4"/>
    <property type="match status" value="1"/>
</dbReference>
<dbReference type="PANTHER" id="PTHR23132">
    <property type="entry name" value="D-ALANINE--D-ALANINE LIGASE"/>
    <property type="match status" value="1"/>
</dbReference>
<dbReference type="PANTHER" id="PTHR23132:SF25">
    <property type="entry name" value="D-ALANINE--D-ALANINE LIGASE A"/>
    <property type="match status" value="1"/>
</dbReference>
<dbReference type="Pfam" id="PF07478">
    <property type="entry name" value="Dala_Dala_lig_C"/>
    <property type="match status" value="1"/>
</dbReference>
<dbReference type="Pfam" id="PF01820">
    <property type="entry name" value="Dala_Dala_lig_N"/>
    <property type="match status" value="1"/>
</dbReference>
<dbReference type="PIRSF" id="PIRSF039102">
    <property type="entry name" value="Ddl/VanB"/>
    <property type="match status" value="1"/>
</dbReference>
<dbReference type="SUPFAM" id="SSF56059">
    <property type="entry name" value="Glutathione synthetase ATP-binding domain-like"/>
    <property type="match status" value="1"/>
</dbReference>
<dbReference type="SUPFAM" id="SSF52440">
    <property type="entry name" value="PreATP-grasp domain"/>
    <property type="match status" value="1"/>
</dbReference>
<dbReference type="PROSITE" id="PS50975">
    <property type="entry name" value="ATP_GRASP"/>
    <property type="match status" value="1"/>
</dbReference>
<dbReference type="PROSITE" id="PS00843">
    <property type="entry name" value="DALA_DALA_LIGASE_1"/>
    <property type="match status" value="1"/>
</dbReference>
<dbReference type="PROSITE" id="PS00844">
    <property type="entry name" value="DALA_DALA_LIGASE_2"/>
    <property type="match status" value="1"/>
</dbReference>
<comment type="function">
    <text evidence="2">Cell wall formation.</text>
</comment>
<comment type="catalytic activity">
    <reaction evidence="2">
        <text>2 D-alanine + ATP = D-alanyl-D-alanine + ADP + phosphate + H(+)</text>
        <dbReference type="Rhea" id="RHEA:11224"/>
        <dbReference type="ChEBI" id="CHEBI:15378"/>
        <dbReference type="ChEBI" id="CHEBI:30616"/>
        <dbReference type="ChEBI" id="CHEBI:43474"/>
        <dbReference type="ChEBI" id="CHEBI:57416"/>
        <dbReference type="ChEBI" id="CHEBI:57822"/>
        <dbReference type="ChEBI" id="CHEBI:456216"/>
        <dbReference type="EC" id="6.3.2.4"/>
    </reaction>
</comment>
<comment type="cofactor">
    <cofactor evidence="1">
        <name>Mg(2+)</name>
        <dbReference type="ChEBI" id="CHEBI:18420"/>
    </cofactor>
    <cofactor evidence="1">
        <name>Mn(2+)</name>
        <dbReference type="ChEBI" id="CHEBI:29035"/>
    </cofactor>
    <text evidence="1">Binds 2 magnesium or manganese ions per subunit.</text>
</comment>
<comment type="pathway">
    <text evidence="2">Cell wall biogenesis; peptidoglycan biosynthesis.</text>
</comment>
<comment type="subcellular location">
    <subcellularLocation>
        <location evidence="2">Cytoplasm</location>
    </subcellularLocation>
</comment>
<comment type="similarity">
    <text evidence="2">Belongs to the D-alanine--D-alanine ligase family.</text>
</comment>
<proteinExistence type="inferred from homology"/>
<keyword id="KW-0067">ATP-binding</keyword>
<keyword id="KW-0133">Cell shape</keyword>
<keyword id="KW-0961">Cell wall biogenesis/degradation</keyword>
<keyword id="KW-0963">Cytoplasm</keyword>
<keyword id="KW-0436">Ligase</keyword>
<keyword id="KW-0460">Magnesium</keyword>
<keyword id="KW-0464">Manganese</keyword>
<keyword id="KW-0479">Metal-binding</keyword>
<keyword id="KW-0547">Nucleotide-binding</keyword>
<keyword id="KW-0573">Peptidoglycan synthesis</keyword>
<protein>
    <recommendedName>
        <fullName evidence="2">D-alanine--D-alanine ligase</fullName>
        <ecNumber evidence="2">6.3.2.4</ecNumber>
    </recommendedName>
    <alternativeName>
        <fullName evidence="2">D-Ala-D-Ala ligase</fullName>
    </alternativeName>
    <alternativeName>
        <fullName evidence="2">D-alanylalanine synthetase</fullName>
    </alternativeName>
</protein>
<feature type="chain" id="PRO_1000202194" description="D-alanine--D-alanine ligase">
    <location>
        <begin position="1"/>
        <end position="395"/>
    </location>
</feature>
<feature type="domain" description="ATP-grasp" evidence="2">
    <location>
        <begin position="172"/>
        <end position="391"/>
    </location>
</feature>
<feature type="binding site" evidence="2">
    <location>
        <begin position="204"/>
        <end position="266"/>
    </location>
    <ligand>
        <name>ATP</name>
        <dbReference type="ChEBI" id="CHEBI:30616"/>
    </ligand>
</feature>
<feature type="binding site" evidence="2">
    <location>
        <position position="345"/>
    </location>
    <ligand>
        <name>Mg(2+)</name>
        <dbReference type="ChEBI" id="CHEBI:18420"/>
        <label>1</label>
    </ligand>
</feature>
<feature type="binding site" evidence="2">
    <location>
        <position position="358"/>
    </location>
    <ligand>
        <name>Mg(2+)</name>
        <dbReference type="ChEBI" id="CHEBI:18420"/>
        <label>1</label>
    </ligand>
</feature>
<feature type="binding site" evidence="2">
    <location>
        <position position="358"/>
    </location>
    <ligand>
        <name>Mg(2+)</name>
        <dbReference type="ChEBI" id="CHEBI:18420"/>
        <label>2</label>
    </ligand>
</feature>
<feature type="binding site" evidence="2">
    <location>
        <position position="360"/>
    </location>
    <ligand>
        <name>Mg(2+)</name>
        <dbReference type="ChEBI" id="CHEBI:18420"/>
        <label>2</label>
    </ligand>
</feature>
<name>DDL_BIFLD</name>
<organism>
    <name type="scientific">Bifidobacterium longum (strain DJO10A)</name>
    <dbReference type="NCBI Taxonomy" id="205913"/>
    <lineage>
        <taxon>Bacteria</taxon>
        <taxon>Bacillati</taxon>
        <taxon>Actinomycetota</taxon>
        <taxon>Actinomycetes</taxon>
        <taxon>Bifidobacteriales</taxon>
        <taxon>Bifidobacteriaceae</taxon>
        <taxon>Bifidobacterium</taxon>
    </lineage>
</organism>